<gene>
    <name evidence="17" type="primary">PDE3B</name>
</gene>
<accession>Q13370</accession>
<accession>B7ZM37</accession>
<accession>O00639</accession>
<accession>Q14408</accession>
<accession>Q6SEI4</accession>
<comment type="function">
    <text evidence="3 8 10">Cyclic nucleotide phosphodiesterase with a dual-specificity for the second messengers cAMP and cGMP, which are key regulators of many important physiological process (PubMed:14592490, PubMed:21393242). Regulates angiogenesis by inhibiting the cAMP-dependent guanine nucleotide exchange factor RAPGEF3 and downstream phosphatidylinositol 3-kinase gamma-mediated signaling (PubMed:21393242). Controls cardiac contractility by reducing cAMP concentration in cardiocytes (By similarity).</text>
</comment>
<comment type="catalytic activity">
    <reaction evidence="8">
        <text>a nucleoside 3',5'-cyclic phosphate + H2O = a nucleoside 5'-phosphate + H(+)</text>
        <dbReference type="Rhea" id="RHEA:14653"/>
        <dbReference type="ChEBI" id="CHEBI:15377"/>
        <dbReference type="ChEBI" id="CHEBI:15378"/>
        <dbReference type="ChEBI" id="CHEBI:57867"/>
        <dbReference type="ChEBI" id="CHEBI:58464"/>
        <dbReference type="EC" id="3.1.4.17"/>
    </reaction>
    <physiologicalReaction direction="left-to-right" evidence="16">
        <dbReference type="Rhea" id="RHEA:14654"/>
    </physiologicalReaction>
</comment>
<comment type="catalytic activity">
    <reaction evidence="8">
        <text>3',5'-cyclic AMP + H2O = AMP + H(+)</text>
        <dbReference type="Rhea" id="RHEA:25277"/>
        <dbReference type="ChEBI" id="CHEBI:15377"/>
        <dbReference type="ChEBI" id="CHEBI:15378"/>
        <dbReference type="ChEBI" id="CHEBI:58165"/>
        <dbReference type="ChEBI" id="CHEBI:456215"/>
    </reaction>
    <physiologicalReaction direction="left-to-right" evidence="16">
        <dbReference type="Rhea" id="RHEA:25278"/>
    </physiologicalReaction>
</comment>
<comment type="catalytic activity">
    <reaction evidence="4">
        <text>3',5'-cyclic GMP + H2O = GMP + H(+)</text>
        <dbReference type="Rhea" id="RHEA:16957"/>
        <dbReference type="ChEBI" id="CHEBI:15377"/>
        <dbReference type="ChEBI" id="CHEBI:15378"/>
        <dbReference type="ChEBI" id="CHEBI:57746"/>
        <dbReference type="ChEBI" id="CHEBI:58115"/>
    </reaction>
    <physiologicalReaction direction="left-to-right" evidence="4">
        <dbReference type="Rhea" id="RHEA:16958"/>
    </physiologicalReaction>
</comment>
<comment type="cofactor">
    <cofactor evidence="9">
        <name>Mg(2+)</name>
        <dbReference type="ChEBI" id="CHEBI:18420"/>
    </cofactor>
    <text evidence="9">Binds 2 divalent metal cations per subunit.</text>
</comment>
<comment type="cofactor">
    <cofactor evidence="2">
        <name>Mn(2+)</name>
        <dbReference type="ChEBI" id="CHEBI:29035"/>
    </cofactor>
    <text evidence="2">Binds 2 divalent metal cations per subunit.</text>
</comment>
<comment type="activity regulation">
    <text evidence="4">Inhibited by cGMP.</text>
</comment>
<comment type="subunit">
    <text evidence="3 9 10">Homodimer (PubMed:15147193). Interacts with PIK3CG; regulates PDE3B activity and thereby cAMP levels in cells (By similarity). Interacts with RAPGEF3 and PIK3R6; form a signaling complex that regulates phosphatidylinositol 3-kinase gamma in angiogenesis (PubMed:21393242). Interacts with ABHD15; this interaction regulates PDE3B's stability and expression and, thereby, impacts the antilipolytic action of insulin (By similarity).</text>
</comment>
<comment type="interaction">
    <interactant intactId="EBI-6172856">
        <id>Q13370</id>
    </interactant>
    <interactant intactId="EBI-10187349">
        <id>O60760</id>
        <label>HPGDS</label>
    </interactant>
    <organismsDiffer>false</organismsDiffer>
    <experiments>3</experiments>
</comment>
<comment type="interaction">
    <interactant intactId="EBI-6172856">
        <id>Q13370</id>
    </interactant>
    <interactant intactId="EBI-739832">
        <id>Q8TBB1</id>
        <label>LNX1</label>
    </interactant>
    <organismsDiffer>false</organismsDiffer>
    <experiments>3</experiments>
</comment>
<comment type="interaction">
    <interactant intactId="EBI-6172856">
        <id>Q13370</id>
    </interactant>
    <interactant intactId="EBI-1030384">
        <id>P48736</id>
        <label>PIK3CG</label>
    </interactant>
    <organismsDiffer>false</organismsDiffer>
    <experiments>3</experiments>
</comment>
<comment type="interaction">
    <interactant intactId="EBI-6172856">
        <id>Q13370</id>
    </interactant>
    <interactant intactId="EBI-6172907">
        <id>Q5UE93</id>
        <label>PIK3R6</label>
    </interactant>
    <organismsDiffer>false</organismsDiffer>
    <experiments>3</experiments>
</comment>
<comment type="interaction">
    <interactant intactId="EBI-6172856">
        <id>Q13370</id>
    </interactant>
    <interactant intactId="EBI-6172806">
        <id>O95398</id>
        <label>RAPGEF3</label>
    </interactant>
    <organismsDiffer>false</organismsDiffer>
    <experiments>8</experiments>
</comment>
<comment type="subcellular location">
    <subcellularLocation>
        <location evidence="3">Membrane</location>
        <topology evidence="5">Multi-pass membrane protein</topology>
    </subcellularLocation>
</comment>
<comment type="alternative products">
    <event type="alternative splicing"/>
    <isoform>
        <id>Q13370-1</id>
        <name>1</name>
        <sequence type="displayed"/>
    </isoform>
    <isoform>
        <id>Q13370-2</id>
        <name>2</name>
        <sequence type="described" ref="VSP_054138"/>
    </isoform>
</comment>
<comment type="tissue specificity">
    <text evidence="11">Abundant in adipose tissues.</text>
</comment>
<comment type="PTM">
    <text evidence="3">Phosphorylation at Ser-295 mediates insulin-induced activation of PDE3B.</text>
</comment>
<comment type="similarity">
    <text evidence="15">Belongs to the cyclic nucleotide phosphodiesterase family. PDE3 subfamily.</text>
</comment>
<proteinExistence type="evidence at protein level"/>
<evidence type="ECO:0000250" key="1">
    <source>
        <dbReference type="UniProtKB" id="O76083"/>
    </source>
</evidence>
<evidence type="ECO:0000250" key="2">
    <source>
        <dbReference type="UniProtKB" id="Q14432"/>
    </source>
</evidence>
<evidence type="ECO:0000250" key="3">
    <source>
        <dbReference type="UniProtKB" id="Q61409"/>
    </source>
</evidence>
<evidence type="ECO:0000250" key="4">
    <source>
        <dbReference type="UniProtKB" id="Q63085"/>
    </source>
</evidence>
<evidence type="ECO:0000255" key="5"/>
<evidence type="ECO:0000255" key="6">
    <source>
        <dbReference type="PROSITE-ProRule" id="PRU01192"/>
    </source>
</evidence>
<evidence type="ECO:0000256" key="7">
    <source>
        <dbReference type="SAM" id="MobiDB-lite"/>
    </source>
</evidence>
<evidence type="ECO:0000269" key="8">
    <source>
    </source>
</evidence>
<evidence type="ECO:0000269" key="9">
    <source>
    </source>
</evidence>
<evidence type="ECO:0000269" key="10">
    <source>
    </source>
</evidence>
<evidence type="ECO:0000269" key="11">
    <source>
    </source>
</evidence>
<evidence type="ECO:0000269" key="12">
    <source>
    </source>
</evidence>
<evidence type="ECO:0000303" key="13">
    <source>
    </source>
</evidence>
<evidence type="ECO:0000303" key="14">
    <source>
    </source>
</evidence>
<evidence type="ECO:0000305" key="15"/>
<evidence type="ECO:0000305" key="16">
    <source>
    </source>
</evidence>
<evidence type="ECO:0000312" key="17">
    <source>
        <dbReference type="HGNC" id="HGNC:8779"/>
    </source>
</evidence>
<evidence type="ECO:0007744" key="18">
    <source>
        <dbReference type="PDB" id="1SO2"/>
    </source>
</evidence>
<evidence type="ECO:0007744" key="19">
    <source>
        <dbReference type="PDB" id="1SOJ"/>
    </source>
</evidence>
<evidence type="ECO:0007744" key="20">
    <source>
    </source>
</evidence>
<evidence type="ECO:0007744" key="21">
    <source>
    </source>
</evidence>
<evidence type="ECO:0007829" key="22">
    <source>
        <dbReference type="PDB" id="1SO2"/>
    </source>
</evidence>
<evidence type="ECO:0007829" key="23">
    <source>
        <dbReference type="PDB" id="1SOJ"/>
    </source>
</evidence>
<dbReference type="EC" id="3.1.4.17" evidence="8"/>
<dbReference type="EMBL" id="U38178">
    <property type="protein sequence ID" value="AAC50724.1"/>
    <property type="molecule type" value="Genomic_DNA"/>
</dbReference>
<dbReference type="EMBL" id="D50640">
    <property type="protein sequence ID" value="BAA09306.1"/>
    <property type="molecule type" value="Genomic_DNA"/>
</dbReference>
<dbReference type="EMBL" id="X95520">
    <property type="protein sequence ID" value="CAA64774.1"/>
    <property type="molecule type" value="mRNA"/>
</dbReference>
<dbReference type="EMBL" id="AY459346">
    <property type="protein sequence ID" value="AAR24292.1"/>
    <property type="molecule type" value="mRNA"/>
</dbReference>
<dbReference type="EMBL" id="AC018795">
    <property type="status" value="NOT_ANNOTATED_CDS"/>
    <property type="molecule type" value="Genomic_DNA"/>
</dbReference>
<dbReference type="EMBL" id="AC087207">
    <property type="status" value="NOT_ANNOTATED_CDS"/>
    <property type="molecule type" value="Genomic_DNA"/>
</dbReference>
<dbReference type="EMBL" id="AC090835">
    <property type="status" value="NOT_ANNOTATED_CDS"/>
    <property type="molecule type" value="Genomic_DNA"/>
</dbReference>
<dbReference type="EMBL" id="CH471064">
    <property type="protein sequence ID" value="EAW68474.1"/>
    <property type="molecule type" value="Genomic_DNA"/>
</dbReference>
<dbReference type="EMBL" id="BC136565">
    <property type="protein sequence ID" value="AAI36566.1"/>
    <property type="molecule type" value="mRNA"/>
</dbReference>
<dbReference type="EMBL" id="BC136566">
    <property type="protein sequence ID" value="AAI36567.1"/>
    <property type="molecule type" value="mRNA"/>
</dbReference>
<dbReference type="EMBL" id="BC144248">
    <property type="protein sequence ID" value="AAI44249.1"/>
    <property type="molecule type" value="mRNA"/>
</dbReference>
<dbReference type="CCDS" id="CCDS7817.1">
    <molecule id="Q13370-1"/>
</dbReference>
<dbReference type="CCDS" id="CCDS91445.1">
    <molecule id="Q13370-2"/>
</dbReference>
<dbReference type="PIR" id="S70522">
    <property type="entry name" value="S70522"/>
</dbReference>
<dbReference type="RefSeq" id="NP_000913.2">
    <molecule id="Q13370-1"/>
    <property type="nucleotide sequence ID" value="NM_000922.3"/>
</dbReference>
<dbReference type="RefSeq" id="NP_001350498.1">
    <molecule id="Q13370-2"/>
    <property type="nucleotide sequence ID" value="NM_001363569.2"/>
</dbReference>
<dbReference type="PDB" id="1SO2">
    <property type="method" value="X-ray"/>
    <property type="resolution" value="2.40 A"/>
    <property type="chains" value="A/B/C/D=654-1073"/>
</dbReference>
<dbReference type="PDB" id="1SOJ">
    <property type="method" value="X-ray"/>
    <property type="resolution" value="2.90 A"/>
    <property type="chains" value="A/B/C/D/E/F/G/H/I/J/K/L=654-1073"/>
</dbReference>
<dbReference type="PDB" id="8SYC">
    <property type="method" value="X-ray"/>
    <property type="resolution" value="2.70 A"/>
    <property type="chains" value="A/D=653-1074"/>
</dbReference>
<dbReference type="PDBsum" id="1SO2"/>
<dbReference type="PDBsum" id="1SOJ"/>
<dbReference type="PDBsum" id="8SYC"/>
<dbReference type="SMR" id="Q13370"/>
<dbReference type="BioGRID" id="111166">
    <property type="interactions" value="124"/>
</dbReference>
<dbReference type="CORUM" id="Q13370"/>
<dbReference type="FunCoup" id="Q13370">
    <property type="interactions" value="1601"/>
</dbReference>
<dbReference type="IntAct" id="Q13370">
    <property type="interactions" value="53"/>
</dbReference>
<dbReference type="STRING" id="9606.ENSP00000282096"/>
<dbReference type="BindingDB" id="Q13370"/>
<dbReference type="ChEMBL" id="CHEMBL290"/>
<dbReference type="DrugBank" id="DB07954">
    <property type="generic name" value="3-isobutyl-1-methyl-7H-xanthine"/>
</dbReference>
<dbReference type="DrugBank" id="DB01640">
    <property type="generic name" value="6-(4-{[2-(3-iodobenzyl)-3-oxocyclohex-1-en-1-yl]amino}phenyl)-5-methyl-4,5-dihydropyridazin-3(2H)-one"/>
</dbReference>
<dbReference type="DrugBank" id="DB01427">
    <property type="generic name" value="Amrinone"/>
</dbReference>
<dbReference type="DrugBank" id="DB00201">
    <property type="generic name" value="Caffeine"/>
</dbReference>
<dbReference type="DrugBank" id="DB16157">
    <property type="generic name" value="Ensifentrine"/>
</dbReference>
<dbReference type="DrugBank" id="DB01970">
    <property type="generic name" value="Hg9a-9, Nonanoyl-N-Hydroxyethylglucamide"/>
</dbReference>
<dbReference type="DrugBank" id="DB01113">
    <property type="generic name" value="Papaverine"/>
</dbReference>
<dbReference type="DrugBank" id="DB09283">
    <property type="generic name" value="Trapidil"/>
</dbReference>
<dbReference type="DrugCentral" id="Q13370"/>
<dbReference type="GuidetoPHARMACOLOGY" id="1299"/>
<dbReference type="GlyGen" id="Q13370">
    <property type="glycosylation" value="2 sites, 1 O-linked glycan (2 sites)"/>
</dbReference>
<dbReference type="iPTMnet" id="Q13370"/>
<dbReference type="PhosphoSitePlus" id="Q13370"/>
<dbReference type="SwissPalm" id="Q13370"/>
<dbReference type="BioMuta" id="PDE3B"/>
<dbReference type="DMDM" id="143811435"/>
<dbReference type="jPOST" id="Q13370"/>
<dbReference type="MassIVE" id="Q13370"/>
<dbReference type="PaxDb" id="9606-ENSP00000282096"/>
<dbReference type="PeptideAtlas" id="Q13370"/>
<dbReference type="ProteomicsDB" id="59354">
    <molecule id="Q13370-1"/>
</dbReference>
<dbReference type="ProteomicsDB" id="7244"/>
<dbReference type="Pumba" id="Q13370"/>
<dbReference type="Antibodypedia" id="4012">
    <property type="antibodies" value="234 antibodies from 31 providers"/>
</dbReference>
<dbReference type="DNASU" id="5140"/>
<dbReference type="Ensembl" id="ENST00000282096.9">
    <molecule id="Q13370-1"/>
    <property type="protein sequence ID" value="ENSP00000282096.4"/>
    <property type="gene ID" value="ENSG00000152270.9"/>
</dbReference>
<dbReference type="Ensembl" id="ENST00000455098.2">
    <molecule id="Q13370-2"/>
    <property type="protein sequence ID" value="ENSP00000388644.2"/>
    <property type="gene ID" value="ENSG00000152270.9"/>
</dbReference>
<dbReference type="GeneID" id="5140"/>
<dbReference type="KEGG" id="hsa:5140"/>
<dbReference type="MANE-Select" id="ENST00000282096.9">
    <property type="protein sequence ID" value="ENSP00000282096.4"/>
    <property type="RefSeq nucleotide sequence ID" value="NM_000922.4"/>
    <property type="RefSeq protein sequence ID" value="NP_000913.2"/>
</dbReference>
<dbReference type="UCSC" id="uc001mln.4">
    <molecule id="Q13370-1"/>
    <property type="organism name" value="human"/>
</dbReference>
<dbReference type="AGR" id="HGNC:8779"/>
<dbReference type="CTD" id="5140"/>
<dbReference type="DisGeNET" id="5140"/>
<dbReference type="GeneCards" id="PDE3B"/>
<dbReference type="HGNC" id="HGNC:8779">
    <property type="gene designation" value="PDE3B"/>
</dbReference>
<dbReference type="HPA" id="ENSG00000152270">
    <property type="expression patterns" value="Tissue enhanced (adipose)"/>
</dbReference>
<dbReference type="MalaCards" id="PDE3B"/>
<dbReference type="MIM" id="602047">
    <property type="type" value="gene"/>
</dbReference>
<dbReference type="neXtProt" id="NX_Q13370"/>
<dbReference type="OpenTargets" id="ENSG00000152270"/>
<dbReference type="PharmGKB" id="PA33127"/>
<dbReference type="VEuPathDB" id="HostDB:ENSG00000152270"/>
<dbReference type="eggNOG" id="ENOG502QSV8">
    <property type="taxonomic scope" value="Eukaryota"/>
</dbReference>
<dbReference type="GeneTree" id="ENSGT00940000159336"/>
<dbReference type="HOGENOM" id="CLU_008844_1_0_1"/>
<dbReference type="InParanoid" id="Q13370"/>
<dbReference type="OMA" id="GRRQIFC"/>
<dbReference type="OrthoDB" id="546632at2759"/>
<dbReference type="PAN-GO" id="Q13370">
    <property type="GO annotations" value="5 GO annotations based on evolutionary models"/>
</dbReference>
<dbReference type="PhylomeDB" id="Q13370"/>
<dbReference type="TreeFam" id="TF329631"/>
<dbReference type="BRENDA" id="3.1.4.17">
    <property type="organism ID" value="2681"/>
</dbReference>
<dbReference type="PathwayCommons" id="Q13370"/>
<dbReference type="Reactome" id="R-HSA-165160">
    <property type="pathway name" value="PDE3B signalling"/>
</dbReference>
<dbReference type="Reactome" id="R-HSA-418555">
    <property type="pathway name" value="G alpha (s) signalling events"/>
</dbReference>
<dbReference type="SignaLink" id="Q13370"/>
<dbReference type="SIGNOR" id="Q13370"/>
<dbReference type="BioGRID-ORCS" id="5140">
    <property type="hits" value="12 hits in 1156 CRISPR screens"/>
</dbReference>
<dbReference type="ChiTaRS" id="PDE3B">
    <property type="organism name" value="human"/>
</dbReference>
<dbReference type="EvolutionaryTrace" id="Q13370"/>
<dbReference type="GenomeRNAi" id="5140"/>
<dbReference type="Pharos" id="Q13370">
    <property type="development level" value="Tclin"/>
</dbReference>
<dbReference type="PRO" id="PR:Q13370"/>
<dbReference type="Proteomes" id="UP000005640">
    <property type="component" value="Chromosome 11"/>
</dbReference>
<dbReference type="RNAct" id="Q13370">
    <property type="molecule type" value="protein"/>
</dbReference>
<dbReference type="Bgee" id="ENSG00000152270">
    <property type="expression patterns" value="Expressed in colonic epithelium and 143 other cell types or tissues"/>
</dbReference>
<dbReference type="GO" id="GO:0005829">
    <property type="term" value="C:cytosol"/>
    <property type="evidence" value="ECO:0000304"/>
    <property type="project" value="Reactome"/>
</dbReference>
<dbReference type="GO" id="GO:0005783">
    <property type="term" value="C:endoplasmic reticulum"/>
    <property type="evidence" value="ECO:0000250"/>
    <property type="project" value="BHF-UCL"/>
</dbReference>
<dbReference type="GO" id="GO:0005794">
    <property type="term" value="C:Golgi apparatus"/>
    <property type="evidence" value="ECO:0000250"/>
    <property type="project" value="BHF-UCL"/>
</dbReference>
<dbReference type="GO" id="GO:0032045">
    <property type="term" value="C:guanyl-nucleotide exchange factor complex"/>
    <property type="evidence" value="ECO:0000314"/>
    <property type="project" value="BHF-UCL"/>
</dbReference>
<dbReference type="GO" id="GO:0016020">
    <property type="term" value="C:membrane"/>
    <property type="evidence" value="ECO:0000314"/>
    <property type="project" value="BHF-UCL"/>
</dbReference>
<dbReference type="GO" id="GO:0004115">
    <property type="term" value="F:3',5'-cyclic-AMP phosphodiesterase activity"/>
    <property type="evidence" value="ECO:0000314"/>
    <property type="project" value="UniProtKB"/>
</dbReference>
<dbReference type="GO" id="GO:0047555">
    <property type="term" value="F:3',5'-cyclic-GMP phosphodiesterase activity"/>
    <property type="evidence" value="ECO:0000318"/>
    <property type="project" value="GO_Central"/>
</dbReference>
<dbReference type="GO" id="GO:0004114">
    <property type="term" value="F:3',5'-cyclic-nucleotide phosphodiesterase activity"/>
    <property type="evidence" value="ECO:0000314"/>
    <property type="project" value="UniProt"/>
</dbReference>
<dbReference type="GO" id="GO:0046872">
    <property type="term" value="F:metal ion binding"/>
    <property type="evidence" value="ECO:0007669"/>
    <property type="project" value="UniProtKB-KW"/>
</dbReference>
<dbReference type="GO" id="GO:0043422">
    <property type="term" value="F:protein kinase B binding"/>
    <property type="evidence" value="ECO:0000250"/>
    <property type="project" value="BHF-UCL"/>
</dbReference>
<dbReference type="GO" id="GO:0001525">
    <property type="term" value="P:angiogenesis"/>
    <property type="evidence" value="ECO:0007669"/>
    <property type="project" value="UniProtKB-KW"/>
</dbReference>
<dbReference type="GO" id="GO:0019933">
    <property type="term" value="P:cAMP-mediated signaling"/>
    <property type="evidence" value="ECO:0000318"/>
    <property type="project" value="GO_Central"/>
</dbReference>
<dbReference type="GO" id="GO:0032869">
    <property type="term" value="P:cellular response to insulin stimulus"/>
    <property type="evidence" value="ECO:0000250"/>
    <property type="project" value="BHF-UCL"/>
</dbReference>
<dbReference type="GO" id="GO:0007186">
    <property type="term" value="P:G protein-coupled receptor signaling pathway"/>
    <property type="evidence" value="ECO:0000304"/>
    <property type="project" value="Reactome"/>
</dbReference>
<dbReference type="GO" id="GO:0106072">
    <property type="term" value="P:negative regulation of adenylate cyclase-activating G protein-coupled receptor signaling pathway"/>
    <property type="evidence" value="ECO:0000304"/>
    <property type="project" value="BHF-UCL"/>
</dbReference>
<dbReference type="GO" id="GO:0016525">
    <property type="term" value="P:negative regulation of angiogenesis"/>
    <property type="evidence" value="ECO:0000315"/>
    <property type="project" value="UniProtKB"/>
</dbReference>
<dbReference type="GO" id="GO:0007162">
    <property type="term" value="P:negative regulation of cell adhesion"/>
    <property type="evidence" value="ECO:0000315"/>
    <property type="project" value="BHF-UCL"/>
</dbReference>
<dbReference type="GO" id="GO:0033629">
    <property type="term" value="P:negative regulation of cell adhesion mediated by integrin"/>
    <property type="evidence" value="ECO:0000305"/>
    <property type="project" value="BHF-UCL"/>
</dbReference>
<dbReference type="GO" id="GO:0050995">
    <property type="term" value="P:negative regulation of lipid catabolic process"/>
    <property type="evidence" value="ECO:0000315"/>
    <property type="project" value="BHF-UCL"/>
</dbReference>
<dbReference type="GO" id="GO:0045765">
    <property type="term" value="P:regulation of angiogenesis"/>
    <property type="evidence" value="ECO:0000315"/>
    <property type="project" value="UniProt"/>
</dbReference>
<dbReference type="GO" id="GO:0051896">
    <property type="term" value="P:regulation of phosphatidylinositol 3-kinase/protein kinase B signal transduction"/>
    <property type="evidence" value="ECO:0000315"/>
    <property type="project" value="UniProt"/>
</dbReference>
<dbReference type="CDD" id="cd00077">
    <property type="entry name" value="HDc"/>
    <property type="match status" value="1"/>
</dbReference>
<dbReference type="FunFam" id="1.10.1300.10:FF:000008">
    <property type="entry name" value="Phosphodiesterase"/>
    <property type="match status" value="1"/>
</dbReference>
<dbReference type="Gene3D" id="1.10.1300.10">
    <property type="entry name" value="3'5'-cyclic nucleotide phosphodiesterase, catalytic domain"/>
    <property type="match status" value="1"/>
</dbReference>
<dbReference type="InterPro" id="IPR003607">
    <property type="entry name" value="HD/PDEase_dom"/>
</dbReference>
<dbReference type="InterPro" id="IPR002073">
    <property type="entry name" value="PDEase_catalytic_dom"/>
</dbReference>
<dbReference type="InterPro" id="IPR036971">
    <property type="entry name" value="PDEase_catalytic_dom_sf"/>
</dbReference>
<dbReference type="InterPro" id="IPR023174">
    <property type="entry name" value="PDEase_CS"/>
</dbReference>
<dbReference type="PANTHER" id="PTHR11347">
    <property type="entry name" value="CYCLIC NUCLEOTIDE PHOSPHODIESTERASE"/>
    <property type="match status" value="1"/>
</dbReference>
<dbReference type="Pfam" id="PF00233">
    <property type="entry name" value="PDEase_I"/>
    <property type="match status" value="1"/>
</dbReference>
<dbReference type="SMART" id="SM00471">
    <property type="entry name" value="HDc"/>
    <property type="match status" value="1"/>
</dbReference>
<dbReference type="SUPFAM" id="SSF109604">
    <property type="entry name" value="HD-domain/PDEase-like"/>
    <property type="match status" value="1"/>
</dbReference>
<dbReference type="PROSITE" id="PS00126">
    <property type="entry name" value="PDEASE_I_1"/>
    <property type="match status" value="1"/>
</dbReference>
<dbReference type="PROSITE" id="PS51845">
    <property type="entry name" value="PDEASE_I_2"/>
    <property type="match status" value="1"/>
</dbReference>
<name>PDE3B_HUMAN</name>
<reference key="1">
    <citation type="journal article" date="1996" name="Genomics">
        <title>Characterization of the cDNA and gene encoding human PDE3B, the cGIP1 isoform of the human cyclic GMP-inhibited cyclic nucleotide phosphodiesterase family.</title>
        <authorList>
            <person name="Miki T."/>
            <person name="Taira M."/>
            <person name="Hockman S."/>
            <person name="Shimada F."/>
            <person name="Lieman J."/>
            <person name="Napolitano M."/>
            <person name="Ward D."/>
            <person name="Taira M."/>
            <person name="Makino H."/>
            <person name="Manganiello V.C."/>
        </authorList>
    </citation>
    <scope>NUCLEOTIDE SEQUENCE [GENOMIC DNA]</scope>
    <scope>TISSUE SPECIFICITY</scope>
    <source>
        <tissue>Adipose tissue</tissue>
    </source>
</reference>
<reference key="2">
    <citation type="journal article" date="1996" name="FEBS Lett.">
        <title>Differential expression of cGMP-inhibited cyclic nucleotide phosphodiesterases in human hepatoma cell lines.</title>
        <authorList>
            <person name="Murata T."/>
            <person name="Taira M."/>
            <person name="Manganiello V.C."/>
        </authorList>
    </citation>
    <scope>NUCLEOTIDE SEQUENCE [GENOMIC DNA]</scope>
</reference>
<reference key="3">
    <citation type="journal article" date="1996" name="Genomics">
        <title>Molecular cloning and chromosomal assignment of the human homologue of the rat cGMP-inhibited phosphodiesterase 1 (PDE3A) -- a gene involved in fat metabolism located at 11p15.1.</title>
        <authorList>
            <person name="Loebbert R.W."/>
            <person name="Winterpacht A."/>
            <person name="Seipel B."/>
            <person name="Zabel B.U."/>
        </authorList>
    </citation>
    <scope>NUCLEOTIDE SEQUENCE [MRNA] (ISOFORM 1)</scope>
    <scope>VARIANT VAL-87</scope>
</reference>
<reference key="4">
    <citation type="journal article" date="2006" name="J. Biol. Chem.">
        <title>Importance of cAMP-response element-binding protein in regulation of expression of the murine cyclic nucleotide phosphodiesterase 3B (Pde3b) gene in differentiating 3T3-L1 preadipocytes.</title>
        <authorList>
            <person name="Liu H."/>
            <person name="Tang J.R."/>
            <person name="Choi Y.H."/>
            <person name="Napolitano M."/>
            <person name="Hockman S."/>
            <person name="Taira M."/>
            <person name="Degerman E."/>
            <person name="Manganiello V.C."/>
        </authorList>
    </citation>
    <scope>NUCLEOTIDE SEQUENCE [MRNA] (ISOFORM 1)</scope>
</reference>
<reference key="5">
    <citation type="journal article" date="2006" name="Nature">
        <title>Human chromosome 11 DNA sequence and analysis including novel gene identification.</title>
        <authorList>
            <person name="Taylor T.D."/>
            <person name="Noguchi H."/>
            <person name="Totoki Y."/>
            <person name="Toyoda A."/>
            <person name="Kuroki Y."/>
            <person name="Dewar K."/>
            <person name="Lloyd C."/>
            <person name="Itoh T."/>
            <person name="Takeda T."/>
            <person name="Kim D.-W."/>
            <person name="She X."/>
            <person name="Barlow K.F."/>
            <person name="Bloom T."/>
            <person name="Bruford E."/>
            <person name="Chang J.L."/>
            <person name="Cuomo C.A."/>
            <person name="Eichler E."/>
            <person name="FitzGerald M.G."/>
            <person name="Jaffe D.B."/>
            <person name="LaButti K."/>
            <person name="Nicol R."/>
            <person name="Park H.-S."/>
            <person name="Seaman C."/>
            <person name="Sougnez C."/>
            <person name="Yang X."/>
            <person name="Zimmer A.R."/>
            <person name="Zody M.C."/>
            <person name="Birren B.W."/>
            <person name="Nusbaum C."/>
            <person name="Fujiyama A."/>
            <person name="Hattori M."/>
            <person name="Rogers J."/>
            <person name="Lander E.S."/>
            <person name="Sakaki Y."/>
        </authorList>
    </citation>
    <scope>NUCLEOTIDE SEQUENCE [LARGE SCALE GENOMIC DNA]</scope>
</reference>
<reference key="6">
    <citation type="submission" date="2005-09" db="EMBL/GenBank/DDBJ databases">
        <authorList>
            <person name="Mural R.J."/>
            <person name="Istrail S."/>
            <person name="Sutton G.G."/>
            <person name="Florea L."/>
            <person name="Halpern A.L."/>
            <person name="Mobarry C.M."/>
            <person name="Lippert R."/>
            <person name="Walenz B."/>
            <person name="Shatkay H."/>
            <person name="Dew I."/>
            <person name="Miller J.R."/>
            <person name="Flanigan M.J."/>
            <person name="Edwards N.J."/>
            <person name="Bolanos R."/>
            <person name="Fasulo D."/>
            <person name="Halldorsson B.V."/>
            <person name="Hannenhalli S."/>
            <person name="Turner R."/>
            <person name="Yooseph S."/>
            <person name="Lu F."/>
            <person name="Nusskern D.R."/>
            <person name="Shue B.C."/>
            <person name="Zheng X.H."/>
            <person name="Zhong F."/>
            <person name="Delcher A.L."/>
            <person name="Huson D.H."/>
            <person name="Kravitz S.A."/>
            <person name="Mouchard L."/>
            <person name="Reinert K."/>
            <person name="Remington K.A."/>
            <person name="Clark A.G."/>
            <person name="Waterman M.S."/>
            <person name="Eichler E.E."/>
            <person name="Adams M.D."/>
            <person name="Hunkapiller M.W."/>
            <person name="Myers E.W."/>
            <person name="Venter J.C."/>
        </authorList>
    </citation>
    <scope>NUCLEOTIDE SEQUENCE [LARGE SCALE GENOMIC DNA]</scope>
</reference>
<reference key="7">
    <citation type="journal article" date="2004" name="Genome Res.">
        <title>The status, quality, and expansion of the NIH full-length cDNA project: the Mammalian Gene Collection (MGC).</title>
        <authorList>
            <consortium name="The MGC Project Team"/>
        </authorList>
    </citation>
    <scope>NUCLEOTIDE SEQUENCE [LARGE SCALE MRNA] (ISOFORMS 1 AND 2)</scope>
</reference>
<reference key="8">
    <citation type="journal article" date="2003" name="Bioorg. Med. Chem. Lett.">
        <title>Benzyl vinylogous amide substituted aryldihydropyridazinones and aryldimethylpyrazolones as potent and selective PDE3B inhibitors.</title>
        <authorList>
            <person name="Edmondson S.D."/>
            <person name="Mastracchio A."/>
            <person name="He J."/>
            <person name="Chung C.C."/>
            <person name="Forrest M.J."/>
            <person name="Hofsess S."/>
            <person name="MacIntyre E."/>
            <person name="Metzger J."/>
            <person name="O'Connor N."/>
            <person name="Patel K."/>
            <person name="Tong X."/>
            <person name="Tota M.R."/>
            <person name="Van der Ploeg L.H."/>
            <person name="Varnerin J.P."/>
            <person name="Fisher M.H."/>
            <person name="Wyvratt M.J."/>
            <person name="Weber A.E."/>
            <person name="Parmee E.R."/>
        </authorList>
    </citation>
    <scope>FUNCTION</scope>
    <scope>CATALYTIC ACTIVITY</scope>
</reference>
<reference key="9">
    <citation type="journal article" date="2008" name="J. Proteome Res.">
        <title>Combining protein-based IMAC, peptide-based IMAC, and MudPIT for efficient phosphoproteomic analysis.</title>
        <authorList>
            <person name="Cantin G.T."/>
            <person name="Yi W."/>
            <person name="Lu B."/>
            <person name="Park S.K."/>
            <person name="Xu T."/>
            <person name="Lee J.-D."/>
            <person name="Yates J.R. III"/>
        </authorList>
    </citation>
    <scope>IDENTIFICATION BY MASS SPECTROMETRY [LARGE SCALE ANALYSIS]</scope>
    <source>
        <tissue>Cervix carcinoma</tissue>
    </source>
</reference>
<reference key="10">
    <citation type="journal article" date="2008" name="Proc. Natl. Acad. Sci. U.S.A.">
        <title>A quantitative atlas of mitotic phosphorylation.</title>
        <authorList>
            <person name="Dephoure N."/>
            <person name="Zhou C."/>
            <person name="Villen J."/>
            <person name="Beausoleil S.A."/>
            <person name="Bakalarski C.E."/>
            <person name="Elledge S.J."/>
            <person name="Gygi S.P."/>
        </authorList>
    </citation>
    <scope>PHOSPHORYLATION [LARGE SCALE ANALYSIS] AT SER-442</scope>
    <scope>IDENTIFICATION BY MASS SPECTROMETRY [LARGE SCALE ANALYSIS]</scope>
    <source>
        <tissue>Cervix carcinoma</tissue>
    </source>
</reference>
<reference key="11">
    <citation type="journal article" date="2011" name="J. Biol. Chem.">
        <title>A phosphodiesterase 3B-based signaling complex integrates exchange protein activated by cAMP 1 and phosphatidylinositol 3-kinase signals in human arterial endothelial cells.</title>
        <authorList>
            <person name="Wilson L.S."/>
            <person name="Baillie G.S."/>
            <person name="Pritchard L.M."/>
            <person name="Umana B."/>
            <person name="Terrin A."/>
            <person name="Zaccolo M."/>
            <person name="Houslay M.D."/>
            <person name="Maurice D.H."/>
        </authorList>
    </citation>
    <scope>FUNCTION</scope>
    <scope>INTERACTION WITH RAPGEF3 AND PIK3R6</scope>
    <scope>REGION</scope>
    <scope>MUTAGENESIS OF ARG-2; ARG-3; ARG-6; ALA-8; LYS-9; ALA-10; ARG-12; ARG-439; ARG-440; SER-445 AND PRO-449</scope>
</reference>
<reference key="12">
    <citation type="journal article" date="2013" name="J. Proteome Res.">
        <title>Toward a comprehensive characterization of a human cancer cell phosphoproteome.</title>
        <authorList>
            <person name="Zhou H."/>
            <person name="Di Palma S."/>
            <person name="Preisinger C."/>
            <person name="Peng M."/>
            <person name="Polat A.N."/>
            <person name="Heck A.J."/>
            <person name="Mohammed S."/>
        </authorList>
    </citation>
    <scope>PHOSPHORYLATION [LARGE SCALE ANALYSIS] AT SER-442</scope>
    <scope>IDENTIFICATION BY MASS SPECTROMETRY [LARGE SCALE ANALYSIS]</scope>
    <source>
        <tissue>Cervix carcinoma</tissue>
        <tissue>Erythroleukemia</tissue>
    </source>
</reference>
<reference key="13">
    <citation type="journal article" date="2014" name="J. Proteomics">
        <title>An enzyme assisted RP-RPLC approach for in-depth analysis of human liver phosphoproteome.</title>
        <authorList>
            <person name="Bian Y."/>
            <person name="Song C."/>
            <person name="Cheng K."/>
            <person name="Dong M."/>
            <person name="Wang F."/>
            <person name="Huang J."/>
            <person name="Sun D."/>
            <person name="Wang L."/>
            <person name="Ye M."/>
            <person name="Zou H."/>
        </authorList>
    </citation>
    <scope>IDENTIFICATION BY MASS SPECTROMETRY [LARGE SCALE ANALYSIS]</scope>
    <source>
        <tissue>Liver</tissue>
    </source>
</reference>
<reference evidence="18 19" key="14">
    <citation type="journal article" date="2004" name="Biochemistry">
        <title>Crystal structure of human phosphodiesterase 3B: atomic basis for substrate and inhibitor specificity.</title>
        <authorList>
            <person name="Scapin G."/>
            <person name="Patel S.B."/>
            <person name="Chung C."/>
            <person name="Varnerin J.P."/>
            <person name="Edmondson S.D."/>
            <person name="Mastracchio A."/>
            <person name="Parmee E.R."/>
            <person name="Singh S.B."/>
            <person name="Becker J.W."/>
            <person name="Van der Ploeg L.H."/>
            <person name="Tota M.R."/>
        </authorList>
    </citation>
    <scope>X-RAY CRYSTALLOGRAPHY (2.40 ANGSTROMS) OF 654-1073 IN COMPLEX WITH MAGNESIUM AND INHIBITORS</scope>
    <scope>COFACTOR</scope>
    <scope>SUBUNIT</scope>
</reference>
<organism>
    <name type="scientific">Homo sapiens</name>
    <name type="common">Human</name>
    <dbReference type="NCBI Taxonomy" id="9606"/>
    <lineage>
        <taxon>Eukaryota</taxon>
        <taxon>Metazoa</taxon>
        <taxon>Chordata</taxon>
        <taxon>Craniata</taxon>
        <taxon>Vertebrata</taxon>
        <taxon>Euteleostomi</taxon>
        <taxon>Mammalia</taxon>
        <taxon>Eutheria</taxon>
        <taxon>Euarchontoglires</taxon>
        <taxon>Primates</taxon>
        <taxon>Haplorrhini</taxon>
        <taxon>Catarrhini</taxon>
        <taxon>Hominidae</taxon>
        <taxon>Homo</taxon>
    </lineage>
</organism>
<keyword id="KW-0002">3D-structure</keyword>
<keyword id="KW-0025">Alternative splicing</keyword>
<keyword id="KW-0037">Angiogenesis</keyword>
<keyword id="KW-0114">cAMP</keyword>
<keyword id="KW-0140">cGMP</keyword>
<keyword id="KW-0378">Hydrolase</keyword>
<keyword id="KW-0460">Magnesium</keyword>
<keyword id="KW-0472">Membrane</keyword>
<keyword id="KW-0479">Metal-binding</keyword>
<keyword id="KW-0597">Phosphoprotein</keyword>
<keyword id="KW-1267">Proteomics identification</keyword>
<keyword id="KW-1185">Reference proteome</keyword>
<keyword id="KW-0812">Transmembrane</keyword>
<keyword id="KW-1133">Transmembrane helix</keyword>
<feature type="chain" id="PRO_0000198802" description="cGMP-inhibited 3',5'-cyclic phosphodiesterase 3B">
    <location>
        <begin position="1"/>
        <end position="1112"/>
    </location>
</feature>
<feature type="transmembrane region" description="Helical" evidence="5">
    <location>
        <begin position="88"/>
        <end position="108"/>
    </location>
</feature>
<feature type="transmembrane region" description="Helical" evidence="5">
    <location>
        <begin position="117"/>
        <end position="137"/>
    </location>
</feature>
<feature type="transmembrane region" description="Helical" evidence="5">
    <location>
        <begin position="152"/>
        <end position="172"/>
    </location>
</feature>
<feature type="transmembrane region" description="Helical" evidence="5">
    <location>
        <begin position="192"/>
        <end position="212"/>
    </location>
</feature>
<feature type="transmembrane region" description="Helical" evidence="5">
    <location>
        <begin position="220"/>
        <end position="240"/>
    </location>
</feature>
<feature type="transmembrane region" description="Helical" evidence="5">
    <location>
        <begin position="247"/>
        <end position="267"/>
    </location>
</feature>
<feature type="domain" description="PDEase" evidence="6">
    <location>
        <begin position="651"/>
        <end position="1079"/>
    </location>
</feature>
<feature type="region of interest" description="Disordered" evidence="7">
    <location>
        <begin position="1"/>
        <end position="26"/>
    </location>
</feature>
<feature type="region of interest" description="Interaction with RAPGEF3" evidence="10">
    <location>
        <begin position="1"/>
        <end position="25"/>
    </location>
</feature>
<feature type="region of interest" description="Disordered" evidence="7">
    <location>
        <begin position="418"/>
        <end position="471"/>
    </location>
</feature>
<feature type="region of interest" description="Interaction with PIK3R6" evidence="10">
    <location>
        <begin position="436"/>
        <end position="460"/>
    </location>
</feature>
<feature type="region of interest" description="Disordered" evidence="7">
    <location>
        <begin position="1017"/>
        <end position="1051"/>
    </location>
</feature>
<feature type="region of interest" description="Disordered" evidence="7">
    <location>
        <begin position="1092"/>
        <end position="1112"/>
    </location>
</feature>
<feature type="compositionally biased region" description="Basic and acidic residues" evidence="7">
    <location>
        <begin position="1"/>
        <end position="10"/>
    </location>
</feature>
<feature type="compositionally biased region" description="Polar residues" evidence="7">
    <location>
        <begin position="428"/>
        <end position="445"/>
    </location>
</feature>
<feature type="compositionally biased region" description="Basic and acidic residues" evidence="7">
    <location>
        <begin position="454"/>
        <end position="466"/>
    </location>
</feature>
<feature type="compositionally biased region" description="Acidic residues" evidence="7">
    <location>
        <begin position="1017"/>
        <end position="1041"/>
    </location>
</feature>
<feature type="compositionally biased region" description="Acidic residues" evidence="7">
    <location>
        <begin position="1103"/>
        <end position="1112"/>
    </location>
</feature>
<feature type="active site" description="Proton donor" evidence="1">
    <location>
        <position position="737"/>
    </location>
</feature>
<feature type="binding site" evidence="2">
    <location>
        <position position="737"/>
    </location>
    <ligand>
        <name>AMP</name>
        <dbReference type="ChEBI" id="CHEBI:456215"/>
    </ligand>
</feature>
<feature type="binding site" evidence="9 18 19">
    <location>
        <position position="741"/>
    </location>
    <ligand>
        <name>Mg(2+)</name>
        <dbReference type="ChEBI" id="CHEBI:18420"/>
        <label>1</label>
    </ligand>
</feature>
<feature type="binding site" evidence="9 18 19">
    <location>
        <position position="821"/>
    </location>
    <ligand>
        <name>Mg(2+)</name>
        <dbReference type="ChEBI" id="CHEBI:18420"/>
        <label>1</label>
    </ligand>
</feature>
<feature type="binding site" evidence="2">
    <location>
        <position position="822"/>
    </location>
    <ligand>
        <name>AMP</name>
        <dbReference type="ChEBI" id="CHEBI:456215"/>
    </ligand>
</feature>
<feature type="binding site" evidence="9 18 19">
    <location>
        <position position="822"/>
    </location>
    <ligand>
        <name>Mg(2+)</name>
        <dbReference type="ChEBI" id="CHEBI:18420"/>
        <label>1</label>
    </ligand>
</feature>
<feature type="binding site" evidence="9 18">
    <location>
        <position position="822"/>
    </location>
    <ligand>
        <name>Mg(2+)</name>
        <dbReference type="ChEBI" id="CHEBI:18420"/>
        <label>2</label>
    </ligand>
</feature>
<feature type="binding site" evidence="2">
    <location>
        <position position="937"/>
    </location>
    <ligand>
        <name>AMP</name>
        <dbReference type="ChEBI" id="CHEBI:456215"/>
    </ligand>
</feature>
<feature type="binding site" evidence="9 18 19">
    <location>
        <position position="937"/>
    </location>
    <ligand>
        <name>Mg(2+)</name>
        <dbReference type="ChEBI" id="CHEBI:18420"/>
        <label>1</label>
    </ligand>
</feature>
<feature type="binding site" evidence="2">
    <location>
        <position position="988"/>
    </location>
    <ligand>
        <name>AMP</name>
        <dbReference type="ChEBI" id="CHEBI:456215"/>
    </ligand>
</feature>
<feature type="modified residue" description="Phosphoserine" evidence="3">
    <location>
        <position position="13"/>
    </location>
</feature>
<feature type="modified residue" description="Phosphoserine; by PKB/AKT1 or PKB/AKT2" evidence="3">
    <location>
        <position position="295"/>
    </location>
</feature>
<feature type="modified residue" description="Phosphoserine" evidence="3">
    <location>
        <position position="296"/>
    </location>
</feature>
<feature type="modified residue" description="Phosphoserine" evidence="20 21">
    <location>
        <position position="442"/>
    </location>
</feature>
<feature type="splice variant" id="VSP_054138" description="In isoform 2." evidence="13">
    <location>
        <begin position="376"/>
        <end position="426"/>
    </location>
</feature>
<feature type="sequence variant" id="VAR_031462" description="In dbSNP:rs1056584." evidence="12">
    <original>A</original>
    <variation>V</variation>
    <location>
        <position position="87"/>
    </location>
</feature>
<feature type="mutagenesis site" description="Loss of interaction with RAPGEF3." evidence="10">
    <original>R</original>
    <variation>A</variation>
    <location>
        <position position="2"/>
    </location>
</feature>
<feature type="mutagenesis site" description="Loss of interaction with RAPGEF3." evidence="10">
    <original>R</original>
    <variation>A</variation>
    <location>
        <position position="3"/>
    </location>
</feature>
<feature type="mutagenesis site" description="Loss of interaction with RAPGEF3." evidence="10">
    <original>R</original>
    <variation>A</variation>
    <location>
        <position position="6"/>
    </location>
</feature>
<feature type="mutagenesis site" description="Loss of interaction with RAPGEF3." evidence="10">
    <original>A</original>
    <variation>D</variation>
    <location>
        <position position="8"/>
    </location>
</feature>
<feature type="mutagenesis site" description="Loss of interaction with RAPGEF3." evidence="10">
    <original>K</original>
    <variation>A</variation>
    <location>
        <position position="9"/>
    </location>
</feature>
<feature type="mutagenesis site" description="Loss of interaction with RAPGEF3." evidence="10">
    <original>A</original>
    <variation>D</variation>
    <location>
        <position position="10"/>
    </location>
</feature>
<feature type="mutagenesis site" description="Loss of interaction with RAPGEF3." evidence="10">
    <original>R</original>
    <variation>A</variation>
    <location>
        <position position="12"/>
    </location>
</feature>
<feature type="mutagenesis site" description="Loss of interaction with PIK3R6." evidence="10">
    <original>R</original>
    <variation>A</variation>
    <location>
        <position position="439"/>
    </location>
</feature>
<feature type="mutagenesis site" description="Loss of interaction with PIK3R6." evidence="10">
    <original>R</original>
    <variation>A</variation>
    <location>
        <position position="440"/>
    </location>
</feature>
<feature type="mutagenesis site" description="Loss of interaction with PIK3R6." evidence="10">
    <original>S</original>
    <variation>A</variation>
    <location>
        <position position="445"/>
    </location>
</feature>
<feature type="mutagenesis site" description="Loss of interaction with PIK3R6." evidence="10">
    <original>P</original>
    <variation>A</variation>
    <location>
        <position position="449"/>
    </location>
</feature>
<feature type="sequence conflict" description="In Ref. 1; AAC50724 and 2; BAA09306." evidence="15" ref="1 2">
    <original>A</original>
    <variation>D</variation>
    <location>
        <position position="84"/>
    </location>
</feature>
<feature type="helix" evidence="22">
    <location>
        <begin position="662"/>
        <end position="674"/>
    </location>
</feature>
<feature type="helix" evidence="22">
    <location>
        <begin position="681"/>
        <end position="688"/>
    </location>
</feature>
<feature type="helix" evidence="22">
    <location>
        <begin position="689"/>
        <end position="694"/>
    </location>
</feature>
<feature type="helix" evidence="22">
    <location>
        <begin position="695"/>
        <end position="706"/>
    </location>
</feature>
<feature type="helix" evidence="22">
    <location>
        <begin position="709"/>
        <end position="712"/>
    </location>
</feature>
<feature type="helix" evidence="22">
    <location>
        <begin position="717"/>
        <end position="728"/>
    </location>
</feature>
<feature type="strand" evidence="22">
    <location>
        <begin position="735"/>
        <end position="738"/>
    </location>
</feature>
<feature type="helix" evidence="22">
    <location>
        <begin position="739"/>
        <end position="752"/>
    </location>
</feature>
<feature type="helix" evidence="22">
    <location>
        <begin position="802"/>
        <end position="804"/>
    </location>
</feature>
<feature type="helix" evidence="22">
    <location>
        <begin position="808"/>
        <end position="820"/>
    </location>
</feature>
<feature type="turn" evidence="22">
    <location>
        <begin position="821"/>
        <end position="824"/>
    </location>
</feature>
<feature type="helix" evidence="22">
    <location>
        <begin position="830"/>
        <end position="835"/>
    </location>
</feature>
<feature type="helix" evidence="22">
    <location>
        <begin position="839"/>
        <end position="843"/>
    </location>
</feature>
<feature type="turn" evidence="22">
    <location>
        <begin position="844"/>
        <end position="846"/>
    </location>
</feature>
<feature type="helix" evidence="22">
    <location>
        <begin position="849"/>
        <end position="863"/>
    </location>
</feature>
<feature type="helix" evidence="22">
    <location>
        <begin position="866"/>
        <end position="868"/>
    </location>
</feature>
<feature type="turn" evidence="22">
    <location>
        <begin position="870"/>
        <end position="873"/>
    </location>
</feature>
<feature type="helix" evidence="22">
    <location>
        <begin position="876"/>
        <end position="891"/>
    </location>
</feature>
<feature type="helix" evidence="22">
    <location>
        <begin position="895"/>
        <end position="897"/>
    </location>
</feature>
<feature type="helix" evidence="22">
    <location>
        <begin position="898"/>
        <end position="909"/>
    </location>
</feature>
<feature type="strand" evidence="22">
    <location>
        <begin position="911"/>
        <end position="913"/>
    </location>
</feature>
<feature type="helix" evidence="22">
    <location>
        <begin position="922"/>
        <end position="937"/>
    </location>
</feature>
<feature type="helix" evidence="22">
    <location>
        <begin position="940"/>
        <end position="942"/>
    </location>
</feature>
<feature type="helix" evidence="22">
    <location>
        <begin position="945"/>
        <end position="968"/>
    </location>
</feature>
<feature type="helix" evidence="22">
    <location>
        <begin position="984"/>
        <end position="994"/>
    </location>
</feature>
<feature type="helix" evidence="22">
    <location>
        <begin position="996"/>
        <end position="1005"/>
    </location>
</feature>
<feature type="strand" evidence="23">
    <location>
        <begin position="1012"/>
        <end position="1015"/>
    </location>
</feature>
<feature type="strand" evidence="22">
    <location>
        <begin position="1055"/>
        <end position="1058"/>
    </location>
</feature>
<feature type="helix" evidence="22">
    <location>
        <begin position="1060"/>
        <end position="1072"/>
    </location>
</feature>
<sequence length="1112" mass="124333">MRRDERDAKAMRSLQPPDGAGSPPESLRNGYVKSCVSPLRQDPPRGFFFHLCRFCNVELRPPPASPQQPRRCSPFCRARLSLGALAAFVLALLLGAEPESWAAGAAWLRTLLSVCSHSLSPLFSIACAFFFLTCFLTRTKRGPGPGRSCGSWWLLALPACCYLGDFLVWQWWSWPWGDGDAGSAAPHTPPEAAAGRLLLVLSCVGLLLTLAHPLRLRHCVLVLLLASFVWWVSFTSLGSLPSALRPLLSGLVGGAGCLLALGLDHFFQIREAPLHPRLSSAAEEKVPVIRPRRRSSCVSLGETAASYYGSCKIFRRPSLPCISREQMILWDWDLKQWYKPHYQNSGGGNGVDLSVLNEARNMVSDLLTDPSLPPQVISSLRSISSLMGAFSGSCRPKINPLTPFPGFYPCSEIEDPAEKGDRKLNKGLNRNSLPTPQLRRSSGTSGLLPVEQSSRWDRNNGKRPHQEFGISSQGCYLNGPFNSNLLTIPKQRSSSVSLTHHVGLRRAGVLSSLSPVNSSNHGPVSTGSLTNRSPIEFPDTADFLNKPSVILQRSLGNAPNTPDFYQQLRNSDSNLCNSCGHQMLKYVSTSESDGTDCCSGKSGEEENIFSKESFKLMETQQEEETEKKDSRKLFQEGDKWLTEEAQSEQQTNIEQEVSLDLILVEEYDSLIEKMSNWNFPIFELVEKMGEKSGRILSQVMYTLFQDTGLLEIFKIPTQQFMNYFRALENGYRDIPYHNRIHATDVLHAVWYLTTRPVPGLQQIHNGCGTGNETDSDGRINHGRIAYISSKSCSNPDESYGCLSSNIPALELMALYVAAAMHDYDHPGRTNAFLVATNAPQAVLYNDRSVLENHHAASAWNLYLSRPEYNFLLHLDHVEFKRFRFLVIEAILATDLKKHFDFLAEFNAKANDVNSNGIEWSNENDRLLVCQVCIKLADINGPAKVRDLHLKWTEGIVNEFYEQGDEEANLGLPISPFMDRSSPQLAKLQESFITHIVGPLCNSYDAAGLLPGQWLEAEEDNDTESGDDEDGEELDTEDEEMENNLNPKPPRRKSRRRIFCQLMHHLTENHKIWKEIVEEEEKCKADGNKLQVENSSLPQADEIQVIEEADEEE</sequence>
<protein>
    <recommendedName>
        <fullName evidence="16">cGMP-inhibited 3',5'-cyclic phosphodiesterase 3B</fullName>
        <ecNumber evidence="8">3.1.4.17</ecNumber>
    </recommendedName>
    <alternativeName>
        <fullName evidence="14">CGIPDE1</fullName>
        <shortName evidence="14">CGIP1</shortName>
    </alternativeName>
    <alternativeName>
        <fullName>Cyclic GMP-inhibited phosphodiesterase B</fullName>
        <shortName>CGI-PDE B</shortName>
    </alternativeName>
</protein>